<proteinExistence type="inferred from homology"/>
<comment type="function">
    <text evidence="1">Catalyzes the 2-thiolation of uridine at the wobble position (U34) of tRNA, leading to the formation of s(2)U34.</text>
</comment>
<comment type="catalytic activity">
    <reaction evidence="1">
        <text>S-sulfanyl-L-cysteinyl-[protein] + uridine(34) in tRNA + AH2 + ATP = 2-thiouridine(34) in tRNA + L-cysteinyl-[protein] + A + AMP + diphosphate + H(+)</text>
        <dbReference type="Rhea" id="RHEA:47032"/>
        <dbReference type="Rhea" id="RHEA-COMP:10131"/>
        <dbReference type="Rhea" id="RHEA-COMP:11726"/>
        <dbReference type="Rhea" id="RHEA-COMP:11727"/>
        <dbReference type="Rhea" id="RHEA-COMP:11728"/>
        <dbReference type="ChEBI" id="CHEBI:13193"/>
        <dbReference type="ChEBI" id="CHEBI:15378"/>
        <dbReference type="ChEBI" id="CHEBI:17499"/>
        <dbReference type="ChEBI" id="CHEBI:29950"/>
        <dbReference type="ChEBI" id="CHEBI:30616"/>
        <dbReference type="ChEBI" id="CHEBI:33019"/>
        <dbReference type="ChEBI" id="CHEBI:61963"/>
        <dbReference type="ChEBI" id="CHEBI:65315"/>
        <dbReference type="ChEBI" id="CHEBI:87170"/>
        <dbReference type="ChEBI" id="CHEBI:456215"/>
        <dbReference type="EC" id="2.8.1.13"/>
    </reaction>
</comment>
<comment type="subcellular location">
    <subcellularLocation>
        <location evidence="1">Cytoplasm</location>
    </subcellularLocation>
</comment>
<comment type="similarity">
    <text evidence="1">Belongs to the MnmA/TRMU family.</text>
</comment>
<organism>
    <name type="scientific">Campylobacter jejuni subsp. jejuni serotype O:2 (strain ATCC 700819 / NCTC 11168)</name>
    <dbReference type="NCBI Taxonomy" id="192222"/>
    <lineage>
        <taxon>Bacteria</taxon>
        <taxon>Pseudomonadati</taxon>
        <taxon>Campylobacterota</taxon>
        <taxon>Epsilonproteobacteria</taxon>
        <taxon>Campylobacterales</taxon>
        <taxon>Campylobacteraceae</taxon>
        <taxon>Campylobacter</taxon>
    </lineage>
</organism>
<dbReference type="EC" id="2.8.1.13" evidence="1"/>
<dbReference type="EMBL" id="AL111168">
    <property type="protein sequence ID" value="CAL34227.1"/>
    <property type="molecule type" value="Genomic_DNA"/>
</dbReference>
<dbReference type="PIR" id="A81421">
    <property type="entry name" value="A81421"/>
</dbReference>
<dbReference type="RefSeq" id="WP_002851977.1">
    <property type="nucleotide sequence ID" value="NZ_SZUC01000005.1"/>
</dbReference>
<dbReference type="RefSeq" id="YP_002343517.1">
    <property type="nucleotide sequence ID" value="NC_002163.1"/>
</dbReference>
<dbReference type="SMR" id="Q9PJ66"/>
<dbReference type="IntAct" id="Q9PJ66">
    <property type="interactions" value="9"/>
</dbReference>
<dbReference type="STRING" id="192222.Cj0053c"/>
<dbReference type="PaxDb" id="192222-Cj0053c"/>
<dbReference type="EnsemblBacteria" id="CAL34227">
    <property type="protein sequence ID" value="CAL34227"/>
    <property type="gene ID" value="Cj0053c"/>
</dbReference>
<dbReference type="GeneID" id="904383"/>
<dbReference type="KEGG" id="cje:Cj0053c"/>
<dbReference type="PATRIC" id="fig|192222.6.peg.52"/>
<dbReference type="eggNOG" id="COG0482">
    <property type="taxonomic scope" value="Bacteria"/>
</dbReference>
<dbReference type="HOGENOM" id="CLU_035188_0_0_7"/>
<dbReference type="OrthoDB" id="9800696at2"/>
<dbReference type="Proteomes" id="UP000000799">
    <property type="component" value="Chromosome"/>
</dbReference>
<dbReference type="GO" id="GO:0005737">
    <property type="term" value="C:cytoplasm"/>
    <property type="evidence" value="ECO:0007669"/>
    <property type="project" value="UniProtKB-SubCell"/>
</dbReference>
<dbReference type="GO" id="GO:0005524">
    <property type="term" value="F:ATP binding"/>
    <property type="evidence" value="ECO:0007669"/>
    <property type="project" value="UniProtKB-KW"/>
</dbReference>
<dbReference type="GO" id="GO:0000049">
    <property type="term" value="F:tRNA binding"/>
    <property type="evidence" value="ECO:0007669"/>
    <property type="project" value="UniProtKB-KW"/>
</dbReference>
<dbReference type="GO" id="GO:0103016">
    <property type="term" value="F:tRNA-uridine 2-sulfurtransferase activity"/>
    <property type="evidence" value="ECO:0007669"/>
    <property type="project" value="UniProtKB-EC"/>
</dbReference>
<dbReference type="GO" id="GO:0002143">
    <property type="term" value="P:tRNA wobble position uridine thiolation"/>
    <property type="evidence" value="ECO:0007669"/>
    <property type="project" value="TreeGrafter"/>
</dbReference>
<dbReference type="CDD" id="cd01998">
    <property type="entry name" value="MnmA_TRMU-like"/>
    <property type="match status" value="1"/>
</dbReference>
<dbReference type="FunFam" id="2.30.30.280:FF:000001">
    <property type="entry name" value="tRNA-specific 2-thiouridylase MnmA"/>
    <property type="match status" value="1"/>
</dbReference>
<dbReference type="Gene3D" id="2.30.30.280">
    <property type="entry name" value="Adenine nucleotide alpha hydrolases-like domains"/>
    <property type="match status" value="1"/>
</dbReference>
<dbReference type="Gene3D" id="3.40.50.620">
    <property type="entry name" value="HUPs"/>
    <property type="match status" value="1"/>
</dbReference>
<dbReference type="Gene3D" id="2.40.30.10">
    <property type="entry name" value="Translation factors"/>
    <property type="match status" value="1"/>
</dbReference>
<dbReference type="HAMAP" id="MF_00144">
    <property type="entry name" value="tRNA_thiouridyl_MnmA"/>
    <property type="match status" value="1"/>
</dbReference>
<dbReference type="InterPro" id="IPR004506">
    <property type="entry name" value="MnmA-like"/>
</dbReference>
<dbReference type="InterPro" id="IPR046885">
    <property type="entry name" value="MnmA-like_C"/>
</dbReference>
<dbReference type="InterPro" id="IPR046884">
    <property type="entry name" value="MnmA-like_central"/>
</dbReference>
<dbReference type="InterPro" id="IPR023382">
    <property type="entry name" value="MnmA-like_central_sf"/>
</dbReference>
<dbReference type="InterPro" id="IPR014729">
    <property type="entry name" value="Rossmann-like_a/b/a_fold"/>
</dbReference>
<dbReference type="NCBIfam" id="NF001138">
    <property type="entry name" value="PRK00143.1"/>
    <property type="match status" value="1"/>
</dbReference>
<dbReference type="NCBIfam" id="TIGR00420">
    <property type="entry name" value="trmU"/>
    <property type="match status" value="1"/>
</dbReference>
<dbReference type="PANTHER" id="PTHR11933:SF5">
    <property type="entry name" value="MITOCHONDRIAL TRNA-SPECIFIC 2-THIOURIDYLASE 1"/>
    <property type="match status" value="1"/>
</dbReference>
<dbReference type="PANTHER" id="PTHR11933">
    <property type="entry name" value="TRNA 5-METHYLAMINOMETHYL-2-THIOURIDYLATE -METHYLTRANSFERASE"/>
    <property type="match status" value="1"/>
</dbReference>
<dbReference type="Pfam" id="PF03054">
    <property type="entry name" value="tRNA_Me_trans"/>
    <property type="match status" value="1"/>
</dbReference>
<dbReference type="Pfam" id="PF20258">
    <property type="entry name" value="tRNA_Me_trans_C"/>
    <property type="match status" value="1"/>
</dbReference>
<dbReference type="Pfam" id="PF20259">
    <property type="entry name" value="tRNA_Me_trans_M"/>
    <property type="match status" value="1"/>
</dbReference>
<dbReference type="SUPFAM" id="SSF52402">
    <property type="entry name" value="Adenine nucleotide alpha hydrolases-like"/>
    <property type="match status" value="1"/>
</dbReference>
<accession>Q9PJ66</accession>
<accession>Q0PC80</accession>
<feature type="chain" id="PRO_0000121618" description="tRNA-specific 2-thiouridylase MnmA">
    <location>
        <begin position="1"/>
        <end position="338"/>
    </location>
</feature>
<feature type="region of interest" description="Interaction with tRNA" evidence="1">
    <location>
        <begin position="134"/>
        <end position="136"/>
    </location>
</feature>
<feature type="region of interest" description="Interaction with tRNA" evidence="1">
    <location>
        <begin position="288"/>
        <end position="289"/>
    </location>
</feature>
<feature type="active site" description="Nucleophile" evidence="1">
    <location>
        <position position="92"/>
    </location>
</feature>
<feature type="active site" description="Cysteine persulfide intermediate" evidence="1">
    <location>
        <position position="186"/>
    </location>
</feature>
<feature type="binding site" evidence="1">
    <location>
        <begin position="6"/>
        <end position="13"/>
    </location>
    <ligand>
        <name>ATP</name>
        <dbReference type="ChEBI" id="CHEBI:30616"/>
    </ligand>
</feature>
<feature type="binding site" evidence="1">
    <location>
        <position position="32"/>
    </location>
    <ligand>
        <name>ATP</name>
        <dbReference type="ChEBI" id="CHEBI:30616"/>
    </ligand>
</feature>
<feature type="binding site" evidence="1">
    <location>
        <position position="116"/>
    </location>
    <ligand>
        <name>ATP</name>
        <dbReference type="ChEBI" id="CHEBI:30616"/>
    </ligand>
</feature>
<feature type="site" description="Interaction with tRNA" evidence="1">
    <location>
        <position position="117"/>
    </location>
</feature>
<feature type="site" description="Interaction with tRNA" evidence="1">
    <location>
        <position position="321"/>
    </location>
</feature>
<feature type="disulfide bond" description="Alternate" evidence="1">
    <location>
        <begin position="92"/>
        <end position="186"/>
    </location>
</feature>
<gene>
    <name evidence="1" type="primary">mnmA</name>
    <name type="synonym">trmU</name>
    <name type="ordered locus">Cj0053c</name>
</gene>
<sequence>MKILVAMSGGVDSTVTAYKLKNLGHEVIGCYMKLHGKPNYHEENIKKVEKVANFLQIPYHILDLQEDFKNKVYMPFVDTYKEGKTPNPCALCNRFIKLGKLLEFAKSLGCEKLATGHYARLENNLIKTAVDESKDQSYFLASADKEALKYLIFPLGEMKKEDVKKFASTIEVLKSFATQKESSEICFVEDTYVQVLDQFMDTKIPGEVLDSSGKVVGKHEGYMHYTIGKRRGFEVRGAHEPHFVLKINPKQNQIIVGTKEELKISEFNLKNINLFIDAKELDCEVKIRYRSKSTPCKVEIYEDKSAKIILKDPVYGLASGQMAVFYDHDKVIASGFIE</sequence>
<keyword id="KW-0067">ATP-binding</keyword>
<keyword id="KW-0963">Cytoplasm</keyword>
<keyword id="KW-1015">Disulfide bond</keyword>
<keyword id="KW-0547">Nucleotide-binding</keyword>
<keyword id="KW-1185">Reference proteome</keyword>
<keyword id="KW-0694">RNA-binding</keyword>
<keyword id="KW-0808">Transferase</keyword>
<keyword id="KW-0819">tRNA processing</keyword>
<keyword id="KW-0820">tRNA-binding</keyword>
<protein>
    <recommendedName>
        <fullName evidence="1">tRNA-specific 2-thiouridylase MnmA</fullName>
        <ecNumber evidence="1">2.8.1.13</ecNumber>
    </recommendedName>
</protein>
<name>MNMA_CAMJE</name>
<evidence type="ECO:0000255" key="1">
    <source>
        <dbReference type="HAMAP-Rule" id="MF_00144"/>
    </source>
</evidence>
<reference key="1">
    <citation type="journal article" date="2000" name="Nature">
        <title>The genome sequence of the food-borne pathogen Campylobacter jejuni reveals hypervariable sequences.</title>
        <authorList>
            <person name="Parkhill J."/>
            <person name="Wren B.W."/>
            <person name="Mungall K.L."/>
            <person name="Ketley J.M."/>
            <person name="Churcher C.M."/>
            <person name="Basham D."/>
            <person name="Chillingworth T."/>
            <person name="Davies R.M."/>
            <person name="Feltwell T."/>
            <person name="Holroyd S."/>
            <person name="Jagels K."/>
            <person name="Karlyshev A.V."/>
            <person name="Moule S."/>
            <person name="Pallen M.J."/>
            <person name="Penn C.W."/>
            <person name="Quail M.A."/>
            <person name="Rajandream M.A."/>
            <person name="Rutherford K.M."/>
            <person name="van Vliet A.H.M."/>
            <person name="Whitehead S."/>
            <person name="Barrell B.G."/>
        </authorList>
    </citation>
    <scope>NUCLEOTIDE SEQUENCE [LARGE SCALE GENOMIC DNA]</scope>
    <source>
        <strain>ATCC 700819 / NCTC 11168</strain>
    </source>
</reference>